<gene>
    <name evidence="1" type="primary">pnp</name>
    <name type="ordered locus">BH02100</name>
</gene>
<sequence>MFKTHKIEIEWAGRPLTLETGKIARQADGAVIATYGETIVLATVVSAKSPKPDQDFFPLTVNYQEKSYAVGRIPGGYLKRESRPSENETLISRLIDRPIRPLFADGYKNDTQVIVSVIQHDLENNPDILAMIASSAALTLSGVPFMGPIAGARVGYCNGQYILNPHIDEMSESKLDLVVAGTENAVLMVESEAQELPEDIMLGAVMFGHKGLQPILDAIIKLAEVAAKDPRDFVPEDLSDLETAMLEMAEKDIRKAYTITDKQERYAALDALKTEIINKFMPETEEDCKFSVDQIATVFKQLQAKIVRSNILDTKKRIDGRDLSTVRPIQSEVGILPRTHGSALFTRGETQAIVVATLGTGEDEQYIDSLTGMYKETFLLHYNFPPFSVGETGRLGSPGRREIGHGKLAWRAIHPMLPSKESFPYTIRAVSEITESNGSSSMATVCGTSLALMDAGVPLARPVAGIAMGLIKEGERFAVLSDILGDEDHLGDMDFKVAGTANGITALQMDIKIDGITEEIMKIALEQAKGGRIHILNEMAKALTSARAELSEFSPRIEVMNIAVDKIRDVIGTGGKVIREIVEQTGAKINIEDDGTIRIASADAKTIEAAKRWIHSIVDEPEVGVIYQGTVVKTAEFGAFVNFFGSRDGLVHISQLTTERVTKTTDVVKEGDKVWVKLMGFDERGKVRLSMKIVDQKTGKEIIGEDSIKAEQEKYTEETHKSENKRRRKKKEE</sequence>
<keyword id="KW-0963">Cytoplasm</keyword>
<keyword id="KW-0460">Magnesium</keyword>
<keyword id="KW-0479">Metal-binding</keyword>
<keyword id="KW-0548">Nucleotidyltransferase</keyword>
<keyword id="KW-0694">RNA-binding</keyword>
<keyword id="KW-0808">Transferase</keyword>
<name>PNP_BARHE</name>
<organism>
    <name type="scientific">Bartonella henselae (strain ATCC 49882 / DSM 28221 / CCUG 30454 / Houston 1)</name>
    <name type="common">Rochalimaea henselae</name>
    <dbReference type="NCBI Taxonomy" id="283166"/>
    <lineage>
        <taxon>Bacteria</taxon>
        <taxon>Pseudomonadati</taxon>
        <taxon>Pseudomonadota</taxon>
        <taxon>Alphaproteobacteria</taxon>
        <taxon>Hyphomicrobiales</taxon>
        <taxon>Bartonellaceae</taxon>
        <taxon>Bartonella</taxon>
    </lineage>
</organism>
<protein>
    <recommendedName>
        <fullName evidence="1">Polyribonucleotide nucleotidyltransferase</fullName>
        <ecNumber evidence="1">2.7.7.8</ecNumber>
    </recommendedName>
    <alternativeName>
        <fullName evidence="1">Polynucleotide phosphorylase</fullName>
        <shortName evidence="1">PNPase</shortName>
    </alternativeName>
</protein>
<evidence type="ECO:0000255" key="1">
    <source>
        <dbReference type="HAMAP-Rule" id="MF_01595"/>
    </source>
</evidence>
<evidence type="ECO:0000256" key="2">
    <source>
        <dbReference type="SAM" id="MobiDB-lite"/>
    </source>
</evidence>
<reference key="1">
    <citation type="journal article" date="2004" name="Proc. Natl. Acad. Sci. U.S.A.">
        <title>The louse-borne human pathogen Bartonella quintana is a genomic derivative of the zoonotic agent Bartonella henselae.</title>
        <authorList>
            <person name="Alsmark U.C.M."/>
            <person name="Frank A.C."/>
            <person name="Karlberg E.O."/>
            <person name="Legault B.-A."/>
            <person name="Ardell D.H."/>
            <person name="Canbaeck B."/>
            <person name="Eriksson A.-S."/>
            <person name="Naeslund A.K."/>
            <person name="Handley S.A."/>
            <person name="Huvet M."/>
            <person name="La Scola B."/>
            <person name="Holmberg M."/>
            <person name="Andersson S.G.E."/>
        </authorList>
    </citation>
    <scope>NUCLEOTIDE SEQUENCE [LARGE SCALE GENOMIC DNA]</scope>
    <source>
        <strain>ATCC 49882 / DSM 28221 / CCUG 30454 / Houston 1</strain>
    </source>
</reference>
<comment type="function">
    <text evidence="1">Involved in mRNA degradation. Catalyzes the phosphorolysis of single-stranded polyribonucleotides processively in the 3'- to 5'-direction.</text>
</comment>
<comment type="catalytic activity">
    <reaction evidence="1">
        <text>RNA(n+1) + phosphate = RNA(n) + a ribonucleoside 5'-diphosphate</text>
        <dbReference type="Rhea" id="RHEA:22096"/>
        <dbReference type="Rhea" id="RHEA-COMP:14527"/>
        <dbReference type="Rhea" id="RHEA-COMP:17342"/>
        <dbReference type="ChEBI" id="CHEBI:43474"/>
        <dbReference type="ChEBI" id="CHEBI:57930"/>
        <dbReference type="ChEBI" id="CHEBI:140395"/>
        <dbReference type="EC" id="2.7.7.8"/>
    </reaction>
</comment>
<comment type="cofactor">
    <cofactor evidence="1">
        <name>Mg(2+)</name>
        <dbReference type="ChEBI" id="CHEBI:18420"/>
    </cofactor>
</comment>
<comment type="subcellular location">
    <subcellularLocation>
        <location evidence="1">Cytoplasm</location>
    </subcellularLocation>
</comment>
<comment type="similarity">
    <text evidence="1">Belongs to the polyribonucleotide nucleotidyltransferase family.</text>
</comment>
<proteinExistence type="inferred from homology"/>
<feature type="chain" id="PRO_0000329527" description="Polyribonucleotide nucleotidyltransferase">
    <location>
        <begin position="1"/>
        <end position="733"/>
    </location>
</feature>
<feature type="domain" description="KH" evidence="1">
    <location>
        <begin position="555"/>
        <end position="614"/>
    </location>
</feature>
<feature type="domain" description="S1 motif" evidence="1">
    <location>
        <begin position="624"/>
        <end position="692"/>
    </location>
</feature>
<feature type="region of interest" description="Disordered" evidence="2">
    <location>
        <begin position="711"/>
        <end position="733"/>
    </location>
</feature>
<feature type="compositionally biased region" description="Basic and acidic residues" evidence="2">
    <location>
        <begin position="711"/>
        <end position="722"/>
    </location>
</feature>
<feature type="compositionally biased region" description="Basic residues" evidence="2">
    <location>
        <begin position="723"/>
        <end position="733"/>
    </location>
</feature>
<feature type="binding site" evidence="1">
    <location>
        <position position="488"/>
    </location>
    <ligand>
        <name>Mg(2+)</name>
        <dbReference type="ChEBI" id="CHEBI:18420"/>
    </ligand>
</feature>
<feature type="binding site" evidence="1">
    <location>
        <position position="494"/>
    </location>
    <ligand>
        <name>Mg(2+)</name>
        <dbReference type="ChEBI" id="CHEBI:18420"/>
    </ligand>
</feature>
<accession>Q6G5F8</accession>
<dbReference type="EC" id="2.7.7.8" evidence="1"/>
<dbReference type="EMBL" id="BX897699">
    <property type="protein sequence ID" value="CAF27022.1"/>
    <property type="molecule type" value="Genomic_DNA"/>
</dbReference>
<dbReference type="RefSeq" id="WP_011180161.1">
    <property type="nucleotide sequence ID" value="NZ_LRIJ02000001.1"/>
</dbReference>
<dbReference type="SMR" id="Q6G5F8"/>
<dbReference type="PaxDb" id="283166-BH02100"/>
<dbReference type="DNASU" id="2865516"/>
<dbReference type="EnsemblBacteria" id="CAF27022">
    <property type="protein sequence ID" value="CAF27022"/>
    <property type="gene ID" value="BH02100"/>
</dbReference>
<dbReference type="GeneID" id="92984877"/>
<dbReference type="KEGG" id="bhe:BH02100"/>
<dbReference type="eggNOG" id="COG1185">
    <property type="taxonomic scope" value="Bacteria"/>
</dbReference>
<dbReference type="OrthoDB" id="9804305at2"/>
<dbReference type="Proteomes" id="UP000000421">
    <property type="component" value="Chromosome"/>
</dbReference>
<dbReference type="GO" id="GO:0005829">
    <property type="term" value="C:cytosol"/>
    <property type="evidence" value="ECO:0007669"/>
    <property type="project" value="TreeGrafter"/>
</dbReference>
<dbReference type="GO" id="GO:0000175">
    <property type="term" value="F:3'-5'-RNA exonuclease activity"/>
    <property type="evidence" value="ECO:0007669"/>
    <property type="project" value="TreeGrafter"/>
</dbReference>
<dbReference type="GO" id="GO:0000287">
    <property type="term" value="F:magnesium ion binding"/>
    <property type="evidence" value="ECO:0007669"/>
    <property type="project" value="UniProtKB-UniRule"/>
</dbReference>
<dbReference type="GO" id="GO:0004654">
    <property type="term" value="F:polyribonucleotide nucleotidyltransferase activity"/>
    <property type="evidence" value="ECO:0007669"/>
    <property type="project" value="UniProtKB-UniRule"/>
</dbReference>
<dbReference type="GO" id="GO:0003723">
    <property type="term" value="F:RNA binding"/>
    <property type="evidence" value="ECO:0007669"/>
    <property type="project" value="UniProtKB-UniRule"/>
</dbReference>
<dbReference type="GO" id="GO:0006402">
    <property type="term" value="P:mRNA catabolic process"/>
    <property type="evidence" value="ECO:0007669"/>
    <property type="project" value="UniProtKB-UniRule"/>
</dbReference>
<dbReference type="GO" id="GO:0006396">
    <property type="term" value="P:RNA processing"/>
    <property type="evidence" value="ECO:0007669"/>
    <property type="project" value="InterPro"/>
</dbReference>
<dbReference type="CDD" id="cd02393">
    <property type="entry name" value="KH-I_PNPase"/>
    <property type="match status" value="1"/>
</dbReference>
<dbReference type="CDD" id="cd11363">
    <property type="entry name" value="RNase_PH_PNPase_1"/>
    <property type="match status" value="1"/>
</dbReference>
<dbReference type="CDD" id="cd11364">
    <property type="entry name" value="RNase_PH_PNPase_2"/>
    <property type="match status" value="1"/>
</dbReference>
<dbReference type="CDD" id="cd04472">
    <property type="entry name" value="S1_PNPase"/>
    <property type="match status" value="1"/>
</dbReference>
<dbReference type="FunFam" id="2.40.50.140:FF:000107">
    <property type="entry name" value="Polyribonucleotide nucleotidyltransferase"/>
    <property type="match status" value="1"/>
</dbReference>
<dbReference type="FunFam" id="3.30.1370.10:FF:000001">
    <property type="entry name" value="Polyribonucleotide nucleotidyltransferase"/>
    <property type="match status" value="1"/>
</dbReference>
<dbReference type="FunFam" id="3.30.230.70:FF:000001">
    <property type="entry name" value="Polyribonucleotide nucleotidyltransferase"/>
    <property type="match status" value="1"/>
</dbReference>
<dbReference type="FunFam" id="3.30.230.70:FF:000002">
    <property type="entry name" value="Polyribonucleotide nucleotidyltransferase"/>
    <property type="match status" value="1"/>
</dbReference>
<dbReference type="Gene3D" id="3.30.230.70">
    <property type="entry name" value="GHMP Kinase, N-terminal domain"/>
    <property type="match status" value="2"/>
</dbReference>
<dbReference type="Gene3D" id="3.30.1370.10">
    <property type="entry name" value="K Homology domain, type 1"/>
    <property type="match status" value="1"/>
</dbReference>
<dbReference type="Gene3D" id="2.40.50.140">
    <property type="entry name" value="Nucleic acid-binding proteins"/>
    <property type="match status" value="1"/>
</dbReference>
<dbReference type="HAMAP" id="MF_01595">
    <property type="entry name" value="PNPase"/>
    <property type="match status" value="1"/>
</dbReference>
<dbReference type="InterPro" id="IPR001247">
    <property type="entry name" value="ExoRNase_PH_dom1"/>
</dbReference>
<dbReference type="InterPro" id="IPR015847">
    <property type="entry name" value="ExoRNase_PH_dom2"/>
</dbReference>
<dbReference type="InterPro" id="IPR036345">
    <property type="entry name" value="ExoRNase_PH_dom2_sf"/>
</dbReference>
<dbReference type="InterPro" id="IPR004087">
    <property type="entry name" value="KH_dom"/>
</dbReference>
<dbReference type="InterPro" id="IPR004088">
    <property type="entry name" value="KH_dom_type_1"/>
</dbReference>
<dbReference type="InterPro" id="IPR036612">
    <property type="entry name" value="KH_dom_type_1_sf"/>
</dbReference>
<dbReference type="InterPro" id="IPR012340">
    <property type="entry name" value="NA-bd_OB-fold"/>
</dbReference>
<dbReference type="InterPro" id="IPR012162">
    <property type="entry name" value="PNPase"/>
</dbReference>
<dbReference type="InterPro" id="IPR027408">
    <property type="entry name" value="PNPase/RNase_PH_dom_sf"/>
</dbReference>
<dbReference type="InterPro" id="IPR015848">
    <property type="entry name" value="PNPase_PH_RNA-bd_bac/org-type"/>
</dbReference>
<dbReference type="InterPro" id="IPR020568">
    <property type="entry name" value="Ribosomal_Su5_D2-typ_SF"/>
</dbReference>
<dbReference type="InterPro" id="IPR003029">
    <property type="entry name" value="S1_domain"/>
</dbReference>
<dbReference type="NCBIfam" id="TIGR03591">
    <property type="entry name" value="polynuc_phos"/>
    <property type="match status" value="1"/>
</dbReference>
<dbReference type="NCBIfam" id="NF008805">
    <property type="entry name" value="PRK11824.1"/>
    <property type="match status" value="1"/>
</dbReference>
<dbReference type="PANTHER" id="PTHR11252">
    <property type="entry name" value="POLYRIBONUCLEOTIDE NUCLEOTIDYLTRANSFERASE"/>
    <property type="match status" value="1"/>
</dbReference>
<dbReference type="PANTHER" id="PTHR11252:SF0">
    <property type="entry name" value="POLYRIBONUCLEOTIDE NUCLEOTIDYLTRANSFERASE 1, MITOCHONDRIAL"/>
    <property type="match status" value="1"/>
</dbReference>
<dbReference type="Pfam" id="PF00013">
    <property type="entry name" value="KH_1"/>
    <property type="match status" value="1"/>
</dbReference>
<dbReference type="Pfam" id="PF03726">
    <property type="entry name" value="PNPase"/>
    <property type="match status" value="1"/>
</dbReference>
<dbReference type="Pfam" id="PF01138">
    <property type="entry name" value="RNase_PH"/>
    <property type="match status" value="2"/>
</dbReference>
<dbReference type="Pfam" id="PF03725">
    <property type="entry name" value="RNase_PH_C"/>
    <property type="match status" value="2"/>
</dbReference>
<dbReference type="Pfam" id="PF00575">
    <property type="entry name" value="S1"/>
    <property type="match status" value="1"/>
</dbReference>
<dbReference type="PIRSF" id="PIRSF005499">
    <property type="entry name" value="PNPase"/>
    <property type="match status" value="1"/>
</dbReference>
<dbReference type="SMART" id="SM00322">
    <property type="entry name" value="KH"/>
    <property type="match status" value="1"/>
</dbReference>
<dbReference type="SMART" id="SM00316">
    <property type="entry name" value="S1"/>
    <property type="match status" value="1"/>
</dbReference>
<dbReference type="SUPFAM" id="SSF54791">
    <property type="entry name" value="Eukaryotic type KH-domain (KH-domain type I)"/>
    <property type="match status" value="1"/>
</dbReference>
<dbReference type="SUPFAM" id="SSF50249">
    <property type="entry name" value="Nucleic acid-binding proteins"/>
    <property type="match status" value="1"/>
</dbReference>
<dbReference type="SUPFAM" id="SSF55666">
    <property type="entry name" value="Ribonuclease PH domain 2-like"/>
    <property type="match status" value="2"/>
</dbReference>
<dbReference type="SUPFAM" id="SSF54211">
    <property type="entry name" value="Ribosomal protein S5 domain 2-like"/>
    <property type="match status" value="2"/>
</dbReference>
<dbReference type="PROSITE" id="PS50084">
    <property type="entry name" value="KH_TYPE_1"/>
    <property type="match status" value="1"/>
</dbReference>
<dbReference type="PROSITE" id="PS50126">
    <property type="entry name" value="S1"/>
    <property type="match status" value="1"/>
</dbReference>